<evidence type="ECO:0000250" key="1">
    <source>
        <dbReference type="UniProtKB" id="P32352"/>
    </source>
</evidence>
<evidence type="ECO:0000255" key="2"/>
<evidence type="ECO:0000269" key="3">
    <source>
    </source>
</evidence>
<evidence type="ECO:0000269" key="4">
    <source>
    </source>
</evidence>
<evidence type="ECO:0000269" key="5">
    <source>
    </source>
</evidence>
<evidence type="ECO:0000303" key="6">
    <source>
    </source>
</evidence>
<evidence type="ECO:0000305" key="7"/>
<evidence type="ECO:0000305" key="8">
    <source>
    </source>
</evidence>
<protein>
    <recommendedName>
        <fullName evidence="7">C-8 sterol isomerase ERG2</fullName>
        <ecNumber evidence="8">5.-.-.-</ecNumber>
    </recommendedName>
    <alternativeName>
        <fullName evidence="6">Delta-8--delta-7 sterol isomerase ERG2</fullName>
    </alternativeName>
    <alternativeName>
        <fullName evidence="6">Ergosterol biosynthetic protein 2</fullName>
    </alternativeName>
</protein>
<proteinExistence type="evidence at transcript level"/>
<organism>
    <name type="scientific">Gibberella zeae (strain ATCC MYA-4620 / CBS 123657 / FGSC 9075 / NRRL 31084 / PH-1)</name>
    <name type="common">Wheat head blight fungus</name>
    <name type="synonym">Fusarium graminearum</name>
    <dbReference type="NCBI Taxonomy" id="229533"/>
    <lineage>
        <taxon>Eukaryota</taxon>
        <taxon>Fungi</taxon>
        <taxon>Dikarya</taxon>
        <taxon>Ascomycota</taxon>
        <taxon>Pezizomycotina</taxon>
        <taxon>Sordariomycetes</taxon>
        <taxon>Hypocreomycetidae</taxon>
        <taxon>Hypocreales</taxon>
        <taxon>Nectriaceae</taxon>
        <taxon>Fusarium</taxon>
    </lineage>
</organism>
<sequence>MAKTKSKSSKPSSASKSQGGISKLILVLGLLTALLSSVVYFVEQNLEQFYIFDLKHLDDLSKRALAKHGEDTRAVVKHIVDELSEKNPEHVNVKEEWVFNNAGGAMGAMYIIHASVTEYLIIFGTAIGTEGHTGRHTADDYFHILSGTQLAYVPGEYAPEVYPAGSIHHLRRGDVKQYKMPEGCFALEYARGWIPPMLFFGFADGLSSTLDFPTLWDTTRITGREMINNLIKGKL</sequence>
<gene>
    <name type="primary">ERG2</name>
    <name type="ORF">FG07315</name>
    <name type="ORF">FGRAMPH1_01T24501</name>
</gene>
<dbReference type="EC" id="5.-.-.-" evidence="8"/>
<dbReference type="EMBL" id="HG970335">
    <property type="protein sequence ID" value="CEF84912.1"/>
    <property type="molecule type" value="Genomic_DNA"/>
</dbReference>
<dbReference type="RefSeq" id="XP_011327063.1">
    <property type="nucleotide sequence ID" value="XM_011328761.1"/>
</dbReference>
<dbReference type="SMR" id="I1RT23"/>
<dbReference type="FunCoup" id="I1RT23">
    <property type="interactions" value="154"/>
</dbReference>
<dbReference type="STRING" id="229533.I1RT23"/>
<dbReference type="KEGG" id="fgr:FGSG_07315"/>
<dbReference type="VEuPathDB" id="FungiDB:FGRAMPH1_01G24501"/>
<dbReference type="eggNOG" id="KOG4143">
    <property type="taxonomic scope" value="Eukaryota"/>
</dbReference>
<dbReference type="HOGENOM" id="CLU_085469_0_0_1"/>
<dbReference type="InParanoid" id="I1RT23"/>
<dbReference type="OrthoDB" id="86253at110618"/>
<dbReference type="UniPathway" id="UPA00768"/>
<dbReference type="Proteomes" id="UP000070720">
    <property type="component" value="Chromosome 4"/>
</dbReference>
<dbReference type="GO" id="GO:0005789">
    <property type="term" value="C:endoplasmic reticulum membrane"/>
    <property type="evidence" value="ECO:0007669"/>
    <property type="project" value="UniProtKB-SubCell"/>
</dbReference>
<dbReference type="GO" id="GO:0016853">
    <property type="term" value="F:isomerase activity"/>
    <property type="evidence" value="ECO:0007669"/>
    <property type="project" value="UniProtKB-KW"/>
</dbReference>
<dbReference type="GO" id="GO:0006696">
    <property type="term" value="P:ergosterol biosynthetic process"/>
    <property type="evidence" value="ECO:0007669"/>
    <property type="project" value="TreeGrafter"/>
</dbReference>
<dbReference type="InterPro" id="IPR006716">
    <property type="entry name" value="ERG2_sigma1_rcpt-like"/>
</dbReference>
<dbReference type="PANTHER" id="PTHR10868">
    <property type="entry name" value="SIGMA 1-TYPE OPIOID RECEPTOR-RELATED"/>
    <property type="match status" value="1"/>
</dbReference>
<dbReference type="PANTHER" id="PTHR10868:SF1">
    <property type="entry name" value="SIGMA NON-OPIOID INTRACELLULAR RECEPTOR 1"/>
    <property type="match status" value="1"/>
</dbReference>
<dbReference type="Pfam" id="PF04622">
    <property type="entry name" value="ERG2_Sigma1R"/>
    <property type="match status" value="1"/>
</dbReference>
<accession>I1RT23</accession>
<keyword id="KW-0256">Endoplasmic reticulum</keyword>
<keyword id="KW-0413">Isomerase</keyword>
<keyword id="KW-0444">Lipid biosynthesis</keyword>
<keyword id="KW-0443">Lipid metabolism</keyword>
<keyword id="KW-0472">Membrane</keyword>
<keyword id="KW-1185">Reference proteome</keyword>
<keyword id="KW-0752">Steroid biosynthesis</keyword>
<keyword id="KW-0753">Steroid metabolism</keyword>
<keyword id="KW-0756">Sterol biosynthesis</keyword>
<keyword id="KW-1207">Sterol metabolism</keyword>
<keyword id="KW-0812">Transmembrane</keyword>
<keyword id="KW-1133">Transmembrane helix</keyword>
<reference key="1">
    <citation type="journal article" date="2007" name="Science">
        <title>The Fusarium graminearum genome reveals a link between localized polymorphism and pathogen specialization.</title>
        <authorList>
            <person name="Cuomo C.A."/>
            <person name="Gueldener U."/>
            <person name="Xu J.-R."/>
            <person name="Trail F."/>
            <person name="Turgeon B.G."/>
            <person name="Di Pietro A."/>
            <person name="Walton J.D."/>
            <person name="Ma L.-J."/>
            <person name="Baker S.E."/>
            <person name="Rep M."/>
            <person name="Adam G."/>
            <person name="Antoniw J."/>
            <person name="Baldwin T."/>
            <person name="Calvo S.E."/>
            <person name="Chang Y.-L."/>
            <person name="DeCaprio D."/>
            <person name="Gale L.R."/>
            <person name="Gnerre S."/>
            <person name="Goswami R.S."/>
            <person name="Hammond-Kosack K."/>
            <person name="Harris L.J."/>
            <person name="Hilburn K."/>
            <person name="Kennell J.C."/>
            <person name="Kroken S."/>
            <person name="Magnuson J.K."/>
            <person name="Mannhaupt G."/>
            <person name="Mauceli E.W."/>
            <person name="Mewes H.-W."/>
            <person name="Mitterbauer R."/>
            <person name="Muehlbauer G."/>
            <person name="Muensterkoetter M."/>
            <person name="Nelson D."/>
            <person name="O'Donnell K."/>
            <person name="Ouellet T."/>
            <person name="Qi W."/>
            <person name="Quesneville H."/>
            <person name="Roncero M.I.G."/>
            <person name="Seong K.-Y."/>
            <person name="Tetko I.V."/>
            <person name="Urban M."/>
            <person name="Waalwijk C."/>
            <person name="Ward T.J."/>
            <person name="Yao J."/>
            <person name="Birren B.W."/>
            <person name="Kistler H.C."/>
        </authorList>
    </citation>
    <scope>NUCLEOTIDE SEQUENCE [LARGE SCALE GENOMIC DNA]</scope>
    <source>
        <strain>ATCC MYA-4620 / CBS 123657 / FGSC 9075 / NRRL 31084 / PH-1</strain>
    </source>
</reference>
<reference key="2">
    <citation type="journal article" date="2010" name="Nature">
        <title>Comparative genomics reveals mobile pathogenicity chromosomes in Fusarium.</title>
        <authorList>
            <person name="Ma L.-J."/>
            <person name="van der Does H.C."/>
            <person name="Borkovich K.A."/>
            <person name="Coleman J.J."/>
            <person name="Daboussi M.-J."/>
            <person name="Di Pietro A."/>
            <person name="Dufresne M."/>
            <person name="Freitag M."/>
            <person name="Grabherr M."/>
            <person name="Henrissat B."/>
            <person name="Houterman P.M."/>
            <person name="Kang S."/>
            <person name="Shim W.-B."/>
            <person name="Woloshuk C."/>
            <person name="Xie X."/>
            <person name="Xu J.-R."/>
            <person name="Antoniw J."/>
            <person name="Baker S.E."/>
            <person name="Bluhm B.H."/>
            <person name="Breakspear A."/>
            <person name="Brown D.W."/>
            <person name="Butchko R.A.E."/>
            <person name="Chapman S."/>
            <person name="Coulson R."/>
            <person name="Coutinho P.M."/>
            <person name="Danchin E.G.J."/>
            <person name="Diener A."/>
            <person name="Gale L.R."/>
            <person name="Gardiner D.M."/>
            <person name="Goff S."/>
            <person name="Hammond-Kosack K.E."/>
            <person name="Hilburn K."/>
            <person name="Hua-Van A."/>
            <person name="Jonkers W."/>
            <person name="Kazan K."/>
            <person name="Kodira C.D."/>
            <person name="Koehrsen M."/>
            <person name="Kumar L."/>
            <person name="Lee Y.-H."/>
            <person name="Li L."/>
            <person name="Manners J.M."/>
            <person name="Miranda-Saavedra D."/>
            <person name="Mukherjee M."/>
            <person name="Park G."/>
            <person name="Park J."/>
            <person name="Park S.-Y."/>
            <person name="Proctor R.H."/>
            <person name="Regev A."/>
            <person name="Ruiz-Roldan M.C."/>
            <person name="Sain D."/>
            <person name="Sakthikumar S."/>
            <person name="Sykes S."/>
            <person name="Schwartz D.C."/>
            <person name="Turgeon B.G."/>
            <person name="Wapinski I."/>
            <person name="Yoder O."/>
            <person name="Young S."/>
            <person name="Zeng Q."/>
            <person name="Zhou S."/>
            <person name="Galagan J."/>
            <person name="Cuomo C.A."/>
            <person name="Kistler H.C."/>
            <person name="Rep M."/>
        </authorList>
    </citation>
    <scope>GENOME REANNOTATION</scope>
    <source>
        <strain>ATCC MYA-4620 / CBS 123657 / FGSC 9075 / NRRL 31084 / PH-1</strain>
    </source>
</reference>
<reference key="3">
    <citation type="journal article" date="2015" name="BMC Genomics">
        <title>The completed genome sequence of the pathogenic ascomycete fungus Fusarium graminearum.</title>
        <authorList>
            <person name="King R."/>
            <person name="Urban M."/>
            <person name="Hammond-Kosack M.C.U."/>
            <person name="Hassani-Pak K."/>
            <person name="Hammond-Kosack K.E."/>
        </authorList>
    </citation>
    <scope>NUCLEOTIDE SEQUENCE [LARGE SCALE GENOMIC DNA]</scope>
    <source>
        <strain>ATCC MYA-4620 / CBS 123657 / FGSC 9075 / NRRL 31084 / PH-1</strain>
    </source>
</reference>
<reference key="4">
    <citation type="journal article" date="2011" name="Microbiology">
        <title>A sterol C-14 reductase encoded by FgERG24B is responsible for the intrinsic resistance of Fusarium graminearum to amine fungicides.</title>
        <authorList>
            <person name="Liu X."/>
            <person name="Fu J."/>
            <person name="Yun Y."/>
            <person name="Yin Y."/>
            <person name="Ma Z."/>
        </authorList>
    </citation>
    <scope>DISRUPTION PHENOTYPE</scope>
</reference>
<reference key="5">
    <citation type="journal article" date="2013" name="Mol. Plant Pathol.">
        <title>Involvement of FgERG4 in ergosterol biosynthesis, vegetative differentiation and virulence in Fusarium graminearum.</title>
        <authorList>
            <person name="Liu X."/>
            <person name="Jiang J."/>
            <person name="Yin Y."/>
            <person name="Ma Z."/>
        </authorList>
    </citation>
    <scope>INDUCTION</scope>
</reference>
<reference key="6">
    <citation type="journal article" date="2013" name="New Phytol.">
        <title>Characterization of the sterol 14alpha-demethylases of Fusarium graminearum identifies a novel genus-specific CYP51 function.</title>
        <authorList>
            <person name="Fan J."/>
            <person name="Urban M."/>
            <person name="Parker J.E."/>
            <person name="Brewer H.C."/>
            <person name="Kelly S.L."/>
            <person name="Hammond-Kosack K.E."/>
            <person name="Fraaije B.A."/>
            <person name="Liu X."/>
            <person name="Cools H.J."/>
        </authorList>
    </citation>
    <scope>FUNCTION</scope>
    <scope>PATHWAY</scope>
</reference>
<name>ERG2_GIBZE</name>
<comment type="function">
    <text evidence="1 8">C-8 sterol isomerase; part of the third module of ergosterol biosynthesis pathway that includes the late steps of the pathway (By similarity). ERG2 catalyzes the reaction which results in unsaturation at C-7 in the B ring of sterols and thus converts fecosterol to episterol (By similarity). The third module or late pathway involves the ergosterol synthesis itself through consecutive reactions that mainly occur in the endoplasmic reticulum (ER) membrane. Firstly, the squalene synthase ERG9 catalyzes the condensation of 2 farnesyl pyrophosphate moieties to form squalene, which is the precursor of all steroids. Squalene synthase is crucial for balancing the incorporation of farnesyl diphosphate (FPP) into sterol and nonsterol isoprene synthesis. Secondly, squalene is converted into lanosterol by the consecutive action of the squalene epoxidase ERG1 and the lanosterol synthase ERG7. Then, the delta(24)-sterol C-methyltransferase ERG6 methylates lanosterol at C-24 to produce eburicol. Eburicol is the substrate of the sterol 14-alpha demethylase encoded by CYP51A, CYP51B and CYP51C, to yield 4,4,24-trimethyl ergosta-8,14,24(28)-trienol. CYP51B encodes the enzyme primarily responsible for sterol 14-alpha-demethylation, and plays an essential role in ascospore formation. CYP51A encodes an additional sterol 14-alpha-demethylase, induced on ergosterol depletion and responsible for the intrinsic variation in azole sensitivity. The third CYP51 isoform, CYP51C, does not encode a sterol 14-alpha-demethylase, but is required for full virulence on host wheat ears. The C-14 reductase ERG24 then reduces the C14=C15 double bond which leads to 4,4-dimethylfecosterol. A sequence of further demethylations at C-4, involving the C-4 demethylation complex containing the C-4 methylsterol oxidases ERG25, the sterol-4-alpha-carboxylate 3-dehydrogenase ERG26 and the 3-keto-steroid reductase ERG27, leads to the production of fecosterol via 4-methylfecosterol. ERG28 has a role as a scaffold to help anchor ERG25, ERG26 and ERG27 to the endoplasmic reticulum. The C-8 sterol isomerase ERG2 then catalyzes the reaction which results in unsaturation at C-7 in the B ring of sterols and thus converts fecosterol to episterol. The sterol-C5-desaturases ERG3A and ERG3BB then catalyze the introduction of a C-5 double bond in the B ring to produce 5-dehydroepisterol. The C-22 sterol desaturases ERG5A and ERG5B further convert 5-dehydroepisterol into ergosta-5,7,22,24(28)-tetraen-3beta-ol by forming the C-22(23) double bond in the sterol side chain. Finally, ergosta-5,7,22,24(28)-tetraen-3beta-ol is substrate of the C-24(28) sterol reductase ERG4 to produce ergosterol (Probable).</text>
</comment>
<comment type="catalytic activity">
    <reaction evidence="1">
        <text>fecosterol = episterol</text>
        <dbReference type="Rhea" id="RHEA:33435"/>
        <dbReference type="ChEBI" id="CHEBI:17038"/>
        <dbReference type="ChEBI" id="CHEBI:23929"/>
    </reaction>
    <physiologicalReaction direction="left-to-right" evidence="1">
        <dbReference type="Rhea" id="RHEA:33436"/>
    </physiologicalReaction>
</comment>
<comment type="pathway">
    <text evidence="8">Steroid metabolism; ergosterol biosynthesis.</text>
</comment>
<comment type="subcellular location">
    <subcellularLocation>
        <location evidence="1">Endoplasmic reticulum membrane</location>
        <topology evidence="2">Single-pass membrane protein</topology>
    </subcellularLocation>
</comment>
<comment type="induction">
    <text evidence="4">Expression is increased in the absence of the C-24(28) sterol reductase ERG4.</text>
</comment>
<comment type="disruption phenotype">
    <text evidence="3">Surprisingly, does not show changed sensitivity to amines and does not lead to depletion of ergosterol.</text>
</comment>
<comment type="miscellaneous">
    <text evidence="5">In Fusarium, the biosynthesis pathway of the sterol precursors leading to the prevalent sterol ergosterol differs from yeast. The ringsystem of lanosterol in S.cerevisiae is firstly demethylised in three enzymatic steps leading to the intermediate zymosterol and secondly a methyl group is added to zymosterol by the sterol 24-C-methyltransferase to form fecosterol. In Fusarium, lanosterol is firstly transmethylated by the sterol 24-C-methyltransferase leading to the intermediate eburicol and secondly demethylated in three steps to form fecosterol.</text>
</comment>
<comment type="similarity">
    <text evidence="7">Belongs to the ERG2 family.</text>
</comment>
<feature type="chain" id="PRO_0000454369" description="C-8 sterol isomerase ERG2">
    <location>
        <begin position="1"/>
        <end position="235"/>
    </location>
</feature>
<feature type="transmembrane region" description="Helical" evidence="2">
    <location>
        <begin position="21"/>
        <end position="41"/>
    </location>
</feature>